<proteinExistence type="inferred from homology"/>
<sequence>MSLSVEAKAKIVADFGRGTNDSGSSEVQVALLTAQINHLQGHFSEHKKDHHSRRGLLRMVSQRRKLLDYLKRKDVARYTSLIERLGLRR</sequence>
<gene>
    <name evidence="1" type="primary">rpsO</name>
    <name type="ordered locus">Spro_0492</name>
</gene>
<protein>
    <recommendedName>
        <fullName evidence="1">Small ribosomal subunit protein uS15</fullName>
    </recommendedName>
    <alternativeName>
        <fullName evidence="2">30S ribosomal protein S15</fullName>
    </alternativeName>
</protein>
<name>RS15_SERP5</name>
<keyword id="KW-0687">Ribonucleoprotein</keyword>
<keyword id="KW-0689">Ribosomal protein</keyword>
<keyword id="KW-0694">RNA-binding</keyword>
<keyword id="KW-0699">rRNA-binding</keyword>
<comment type="function">
    <text evidence="1">One of the primary rRNA binding proteins, it binds directly to 16S rRNA where it helps nucleate assembly of the platform of the 30S subunit by binding and bridging several RNA helices of the 16S rRNA.</text>
</comment>
<comment type="function">
    <text evidence="1">Forms an intersubunit bridge (bridge B4) with the 23S rRNA of the 50S subunit in the ribosome.</text>
</comment>
<comment type="subunit">
    <text evidence="1">Part of the 30S ribosomal subunit. Forms a bridge to the 50S subunit in the 70S ribosome, contacting the 23S rRNA.</text>
</comment>
<comment type="similarity">
    <text evidence="1">Belongs to the universal ribosomal protein uS15 family.</text>
</comment>
<accession>A8G910</accession>
<reference key="1">
    <citation type="submission" date="2007-09" db="EMBL/GenBank/DDBJ databases">
        <title>Complete sequence of chromosome of Serratia proteamaculans 568.</title>
        <authorList>
            <consortium name="US DOE Joint Genome Institute"/>
            <person name="Copeland A."/>
            <person name="Lucas S."/>
            <person name="Lapidus A."/>
            <person name="Barry K."/>
            <person name="Glavina del Rio T."/>
            <person name="Dalin E."/>
            <person name="Tice H."/>
            <person name="Pitluck S."/>
            <person name="Chain P."/>
            <person name="Malfatti S."/>
            <person name="Shin M."/>
            <person name="Vergez L."/>
            <person name="Schmutz J."/>
            <person name="Larimer F."/>
            <person name="Land M."/>
            <person name="Hauser L."/>
            <person name="Kyrpides N."/>
            <person name="Kim E."/>
            <person name="Taghavi S."/>
            <person name="Newman L."/>
            <person name="Vangronsveld J."/>
            <person name="van der Lelie D."/>
            <person name="Richardson P."/>
        </authorList>
    </citation>
    <scope>NUCLEOTIDE SEQUENCE [LARGE SCALE GENOMIC DNA]</scope>
    <source>
        <strain>568</strain>
    </source>
</reference>
<evidence type="ECO:0000255" key="1">
    <source>
        <dbReference type="HAMAP-Rule" id="MF_01343"/>
    </source>
</evidence>
<evidence type="ECO:0000305" key="2"/>
<organism>
    <name type="scientific">Serratia proteamaculans (strain 568)</name>
    <dbReference type="NCBI Taxonomy" id="399741"/>
    <lineage>
        <taxon>Bacteria</taxon>
        <taxon>Pseudomonadati</taxon>
        <taxon>Pseudomonadota</taxon>
        <taxon>Gammaproteobacteria</taxon>
        <taxon>Enterobacterales</taxon>
        <taxon>Yersiniaceae</taxon>
        <taxon>Serratia</taxon>
    </lineage>
</organism>
<dbReference type="EMBL" id="CP000826">
    <property type="protein sequence ID" value="ABV39600.1"/>
    <property type="molecule type" value="Genomic_DNA"/>
</dbReference>
<dbReference type="SMR" id="A8G910"/>
<dbReference type="STRING" id="399741.Spro_0492"/>
<dbReference type="KEGG" id="spe:Spro_0492"/>
<dbReference type="eggNOG" id="COG0184">
    <property type="taxonomic scope" value="Bacteria"/>
</dbReference>
<dbReference type="HOGENOM" id="CLU_148518_0_0_6"/>
<dbReference type="OrthoDB" id="9799262at2"/>
<dbReference type="GO" id="GO:0022627">
    <property type="term" value="C:cytosolic small ribosomal subunit"/>
    <property type="evidence" value="ECO:0007669"/>
    <property type="project" value="TreeGrafter"/>
</dbReference>
<dbReference type="GO" id="GO:0019843">
    <property type="term" value="F:rRNA binding"/>
    <property type="evidence" value="ECO:0007669"/>
    <property type="project" value="UniProtKB-UniRule"/>
</dbReference>
<dbReference type="GO" id="GO:0003735">
    <property type="term" value="F:structural constituent of ribosome"/>
    <property type="evidence" value="ECO:0007669"/>
    <property type="project" value="InterPro"/>
</dbReference>
<dbReference type="GO" id="GO:0006412">
    <property type="term" value="P:translation"/>
    <property type="evidence" value="ECO:0007669"/>
    <property type="project" value="UniProtKB-UniRule"/>
</dbReference>
<dbReference type="CDD" id="cd00353">
    <property type="entry name" value="Ribosomal_S15p_S13e"/>
    <property type="match status" value="1"/>
</dbReference>
<dbReference type="FunFam" id="1.10.287.10:FF:000002">
    <property type="entry name" value="30S ribosomal protein S15"/>
    <property type="match status" value="1"/>
</dbReference>
<dbReference type="Gene3D" id="6.10.250.3130">
    <property type="match status" value="1"/>
</dbReference>
<dbReference type="Gene3D" id="1.10.287.10">
    <property type="entry name" value="S15/NS1, RNA-binding"/>
    <property type="match status" value="1"/>
</dbReference>
<dbReference type="HAMAP" id="MF_01343_B">
    <property type="entry name" value="Ribosomal_uS15_B"/>
    <property type="match status" value="1"/>
</dbReference>
<dbReference type="InterPro" id="IPR000589">
    <property type="entry name" value="Ribosomal_uS15"/>
</dbReference>
<dbReference type="InterPro" id="IPR005290">
    <property type="entry name" value="Ribosomal_uS15_bac-type"/>
</dbReference>
<dbReference type="InterPro" id="IPR009068">
    <property type="entry name" value="uS15_NS1_RNA-bd_sf"/>
</dbReference>
<dbReference type="NCBIfam" id="TIGR00952">
    <property type="entry name" value="S15_bact"/>
    <property type="match status" value="1"/>
</dbReference>
<dbReference type="PANTHER" id="PTHR23321">
    <property type="entry name" value="RIBOSOMAL PROTEIN S15, BACTERIAL AND ORGANELLAR"/>
    <property type="match status" value="1"/>
</dbReference>
<dbReference type="PANTHER" id="PTHR23321:SF26">
    <property type="entry name" value="SMALL RIBOSOMAL SUBUNIT PROTEIN US15M"/>
    <property type="match status" value="1"/>
</dbReference>
<dbReference type="Pfam" id="PF00312">
    <property type="entry name" value="Ribosomal_S15"/>
    <property type="match status" value="1"/>
</dbReference>
<dbReference type="SMART" id="SM01387">
    <property type="entry name" value="Ribosomal_S15"/>
    <property type="match status" value="1"/>
</dbReference>
<dbReference type="SUPFAM" id="SSF47060">
    <property type="entry name" value="S15/NS1 RNA-binding domain"/>
    <property type="match status" value="1"/>
</dbReference>
<dbReference type="PROSITE" id="PS00362">
    <property type="entry name" value="RIBOSOMAL_S15"/>
    <property type="match status" value="1"/>
</dbReference>
<feature type="chain" id="PRO_1000067693" description="Small ribosomal subunit protein uS15">
    <location>
        <begin position="1"/>
        <end position="89"/>
    </location>
</feature>